<name>Y2115_VIBVU</name>
<evidence type="ECO:0000255" key="1">
    <source>
        <dbReference type="HAMAP-Rule" id="MF_00789"/>
    </source>
</evidence>
<organism>
    <name type="scientific">Vibrio vulnificus (strain CMCP6)</name>
    <dbReference type="NCBI Taxonomy" id="216895"/>
    <lineage>
        <taxon>Bacteria</taxon>
        <taxon>Pseudomonadati</taxon>
        <taxon>Pseudomonadota</taxon>
        <taxon>Gammaproteobacteria</taxon>
        <taxon>Vibrionales</taxon>
        <taxon>Vibrionaceae</taxon>
        <taxon>Vibrio</taxon>
    </lineage>
</organism>
<comment type="similarity">
    <text evidence="1">Belongs to the UPF0319 family.</text>
</comment>
<sequence>MLRVLGLAGMLMSFNIHAAMISPVSGVKILFANGTEVDEPLEPMEVDAKSAQLVVRYAAELGSGSNQKVFDSAPFVITIDNLSEDIKLYPPKVFSYEQANREFNTSPKWRIEGVSGKEISYSQEKLKGNEGFMPYYGMEALIAKHNEERGIVFSAGVVKAEVVTTDKMVEKPATTKNADALVQLQHWYKQASTEERKAFRKWMVDQE</sequence>
<dbReference type="EMBL" id="AE016795">
    <property type="protein sequence ID" value="AAO10503.1"/>
    <property type="molecule type" value="Genomic_DNA"/>
</dbReference>
<dbReference type="RefSeq" id="WP_011079999.1">
    <property type="nucleotide sequence ID" value="NC_004459.3"/>
</dbReference>
<dbReference type="KEGG" id="vvu:VV1_2115"/>
<dbReference type="HOGENOM" id="CLU_073782_3_0_6"/>
<dbReference type="Proteomes" id="UP000002275">
    <property type="component" value="Chromosome 1"/>
</dbReference>
<dbReference type="HAMAP" id="MF_00789">
    <property type="entry name" value="UPF0319"/>
    <property type="match status" value="1"/>
</dbReference>
<dbReference type="InterPro" id="IPR018635">
    <property type="entry name" value="UPF0319"/>
</dbReference>
<dbReference type="PANTHER" id="PTHR38108">
    <property type="entry name" value="UPF0319 PROTEIN YCCT"/>
    <property type="match status" value="1"/>
</dbReference>
<dbReference type="PANTHER" id="PTHR38108:SF1">
    <property type="entry name" value="UPF0319 PROTEIN YCCT"/>
    <property type="match status" value="1"/>
</dbReference>
<dbReference type="Pfam" id="PF09829">
    <property type="entry name" value="DUF2057"/>
    <property type="match status" value="1"/>
</dbReference>
<reference key="1">
    <citation type="submission" date="2002-12" db="EMBL/GenBank/DDBJ databases">
        <title>Complete genome sequence of Vibrio vulnificus CMCP6.</title>
        <authorList>
            <person name="Rhee J.H."/>
            <person name="Kim S.Y."/>
            <person name="Chung S.S."/>
            <person name="Kim J.J."/>
            <person name="Moon Y.H."/>
            <person name="Jeong H."/>
            <person name="Choy H.E."/>
        </authorList>
    </citation>
    <scope>NUCLEOTIDE SEQUENCE [LARGE SCALE GENOMIC DNA]</scope>
    <source>
        <strain>CMCP6</strain>
    </source>
</reference>
<accession>Q8DAS4</accession>
<feature type="signal peptide" evidence="1">
    <location>
        <begin position="1"/>
        <end position="18"/>
    </location>
</feature>
<feature type="chain" id="PRO_0000036312" description="UPF0319 protein VV1_2115">
    <location>
        <begin position="19"/>
        <end position="207"/>
    </location>
</feature>
<protein>
    <recommendedName>
        <fullName evidence="1">UPF0319 protein VV1_2115</fullName>
    </recommendedName>
</protein>
<proteinExistence type="inferred from homology"/>
<keyword id="KW-0732">Signal</keyword>
<gene>
    <name type="ordered locus">VV1_2115</name>
</gene>